<reference key="1">
    <citation type="submission" date="1997-07" db="EMBL/GenBank/DDBJ databases">
        <authorList>
            <person name="Hsu T."/>
            <person name="Minion F.C."/>
        </authorList>
    </citation>
    <scope>NUCLEOTIDE SEQUENCE [GENOMIC DNA]</scope>
</reference>
<reference key="2">
    <citation type="journal article" date="2004" name="J. Bacteriol.">
        <title>The genome sequence of Mycoplasma hyopneumoniae strain 232, the agent of swine mycoplasmosis.</title>
        <authorList>
            <person name="Minion F.C."/>
            <person name="Lefkowitz E.J."/>
            <person name="Madsen M.L."/>
            <person name="Cleary B.J."/>
            <person name="Swartzell S.M."/>
            <person name="Mahairas G.G."/>
        </authorList>
    </citation>
    <scope>NUCLEOTIDE SEQUENCE [LARGE SCALE GENOMIC DNA]</scope>
    <source>
        <strain>232</strain>
    </source>
</reference>
<evidence type="ECO:0000255" key="1">
    <source>
        <dbReference type="HAMAP-Rule" id="MF_00508"/>
    </source>
</evidence>
<evidence type="ECO:0000305" key="2"/>
<protein>
    <recommendedName>
        <fullName evidence="1">Small ribosomal subunit protein uS10</fullName>
    </recommendedName>
    <alternativeName>
        <fullName evidence="2">30S ribosomal protein S10</fullName>
    </alternativeName>
</protein>
<name>RS10_MESH2</name>
<feature type="chain" id="PRO_0000146553" description="Small ribosomal subunit protein uS10">
    <location>
        <begin position="1"/>
        <end position="106"/>
    </location>
</feature>
<sequence length="106" mass="12151">MNTTSIKIKLKSFDHRQIDAAAKKIILLARELNIETRGPVPLPTSRAIYTILRSVHINKKSREQFESRTHKRLVILKVLPTNQKLVTEKISRSQLPAGVWIEIEVS</sequence>
<proteinExistence type="inferred from homology"/>
<comment type="function">
    <text evidence="1">Involved in the binding of tRNA to the ribosomes.</text>
</comment>
<comment type="subunit">
    <text evidence="1">Part of the 30S ribosomal subunit.</text>
</comment>
<comment type="similarity">
    <text evidence="1">Belongs to the universal ribosomal protein uS10 family.</text>
</comment>
<comment type="sequence caution" evidence="2">
    <conflict type="erroneous initiation">
        <sequence resource="EMBL-CDS" id="AAC32524"/>
    </conflict>
</comment>
<comment type="sequence caution" evidence="2">
    <conflict type="erroneous initiation">
        <sequence resource="EMBL-CDS" id="AAV27443"/>
    </conflict>
</comment>
<dbReference type="EMBL" id="AF012904">
    <property type="protein sequence ID" value="AAC32524.1"/>
    <property type="status" value="ALT_INIT"/>
    <property type="molecule type" value="Genomic_DNA"/>
</dbReference>
<dbReference type="EMBL" id="AE017332">
    <property type="protein sequence ID" value="AAV27443.1"/>
    <property type="status" value="ALT_INIT"/>
    <property type="molecule type" value="Genomic_DNA"/>
</dbReference>
<dbReference type="RefSeq" id="WP_014579601.1">
    <property type="nucleotide sequence ID" value="NC_006360.1"/>
</dbReference>
<dbReference type="SMR" id="O50185"/>
<dbReference type="GeneID" id="41334494"/>
<dbReference type="KEGG" id="mhy:mhp186"/>
<dbReference type="eggNOG" id="COG0051">
    <property type="taxonomic scope" value="Bacteria"/>
</dbReference>
<dbReference type="HOGENOM" id="CLU_122625_1_2_14"/>
<dbReference type="PhylomeDB" id="O50185"/>
<dbReference type="Proteomes" id="UP000006822">
    <property type="component" value="Chromosome"/>
</dbReference>
<dbReference type="GO" id="GO:1990904">
    <property type="term" value="C:ribonucleoprotein complex"/>
    <property type="evidence" value="ECO:0007669"/>
    <property type="project" value="UniProtKB-KW"/>
</dbReference>
<dbReference type="GO" id="GO:0005840">
    <property type="term" value="C:ribosome"/>
    <property type="evidence" value="ECO:0007669"/>
    <property type="project" value="UniProtKB-KW"/>
</dbReference>
<dbReference type="GO" id="GO:0003735">
    <property type="term" value="F:structural constituent of ribosome"/>
    <property type="evidence" value="ECO:0007669"/>
    <property type="project" value="InterPro"/>
</dbReference>
<dbReference type="GO" id="GO:0000049">
    <property type="term" value="F:tRNA binding"/>
    <property type="evidence" value="ECO:0007669"/>
    <property type="project" value="UniProtKB-UniRule"/>
</dbReference>
<dbReference type="GO" id="GO:0006412">
    <property type="term" value="P:translation"/>
    <property type="evidence" value="ECO:0007669"/>
    <property type="project" value="UniProtKB-UniRule"/>
</dbReference>
<dbReference type="FunFam" id="3.30.70.600:FF:000003">
    <property type="entry name" value="30S ribosomal protein S10"/>
    <property type="match status" value="1"/>
</dbReference>
<dbReference type="Gene3D" id="3.30.70.600">
    <property type="entry name" value="Ribosomal protein S10 domain"/>
    <property type="match status" value="1"/>
</dbReference>
<dbReference type="HAMAP" id="MF_00508">
    <property type="entry name" value="Ribosomal_uS10"/>
    <property type="match status" value="1"/>
</dbReference>
<dbReference type="InterPro" id="IPR001848">
    <property type="entry name" value="Ribosomal_uS10"/>
</dbReference>
<dbReference type="InterPro" id="IPR018268">
    <property type="entry name" value="Ribosomal_uS10_CS"/>
</dbReference>
<dbReference type="InterPro" id="IPR027486">
    <property type="entry name" value="Ribosomal_uS10_dom"/>
</dbReference>
<dbReference type="InterPro" id="IPR036838">
    <property type="entry name" value="Ribosomal_uS10_dom_sf"/>
</dbReference>
<dbReference type="NCBIfam" id="NF001861">
    <property type="entry name" value="PRK00596.1"/>
    <property type="match status" value="1"/>
</dbReference>
<dbReference type="NCBIfam" id="TIGR01049">
    <property type="entry name" value="rpsJ_bact"/>
    <property type="match status" value="1"/>
</dbReference>
<dbReference type="PANTHER" id="PTHR11700">
    <property type="entry name" value="30S RIBOSOMAL PROTEIN S10 FAMILY MEMBER"/>
    <property type="match status" value="1"/>
</dbReference>
<dbReference type="Pfam" id="PF00338">
    <property type="entry name" value="Ribosomal_S10"/>
    <property type="match status" value="1"/>
</dbReference>
<dbReference type="PRINTS" id="PR00971">
    <property type="entry name" value="RIBOSOMALS10"/>
</dbReference>
<dbReference type="SMART" id="SM01403">
    <property type="entry name" value="Ribosomal_S10"/>
    <property type="match status" value="1"/>
</dbReference>
<dbReference type="SUPFAM" id="SSF54999">
    <property type="entry name" value="Ribosomal protein S10"/>
    <property type="match status" value="1"/>
</dbReference>
<dbReference type="PROSITE" id="PS00361">
    <property type="entry name" value="RIBOSOMAL_S10"/>
    <property type="match status" value="1"/>
</dbReference>
<keyword id="KW-0687">Ribonucleoprotein</keyword>
<keyword id="KW-0689">Ribosomal protein</keyword>
<accession>O50185</accession>
<accession>Q601L6</accession>
<gene>
    <name evidence="1" type="primary">rpsJ</name>
    <name evidence="1" type="synonym">rps10</name>
    <name type="ordered locus">mhp186</name>
</gene>
<organism>
    <name type="scientific">Mesomycoplasma hyopneumoniae (strain 232)</name>
    <name type="common">Mycoplasma hyopneumoniae</name>
    <dbReference type="NCBI Taxonomy" id="295358"/>
    <lineage>
        <taxon>Bacteria</taxon>
        <taxon>Bacillati</taxon>
        <taxon>Mycoplasmatota</taxon>
        <taxon>Mycoplasmoidales</taxon>
        <taxon>Metamycoplasmataceae</taxon>
        <taxon>Mesomycoplasma</taxon>
    </lineage>
</organism>